<reference key="1">
    <citation type="journal article" date="2005" name="Genome Res.">
        <title>Complete genome sequence of the hyperthermophilic archaeon Thermococcus kodakaraensis KOD1 and comparison with Pyrococcus genomes.</title>
        <authorList>
            <person name="Fukui T."/>
            <person name="Atomi H."/>
            <person name="Kanai T."/>
            <person name="Matsumi R."/>
            <person name="Fujiwara S."/>
            <person name="Imanaka T."/>
        </authorList>
    </citation>
    <scope>NUCLEOTIDE SEQUENCE [LARGE SCALE GENOMIC DNA]</scope>
    <source>
        <strain>ATCC BAA-918 / JCM 12380 / KOD1</strain>
    </source>
</reference>
<name>GATD_THEKO</name>
<comment type="function">
    <text evidence="1">Allows the formation of correctly charged Gln-tRNA(Gln) through the transamidation of misacylated Glu-tRNA(Gln) in organisms which lack glutaminyl-tRNA synthetase. The reaction takes place in the presence of glutamine and ATP through an activated gamma-phospho-Glu-tRNA(Gln). The GatDE system is specific for glutamate and does not act on aspartate.</text>
</comment>
<comment type="catalytic activity">
    <reaction evidence="1">
        <text>L-glutamyl-tRNA(Gln) + L-glutamine + ATP + H2O = L-glutaminyl-tRNA(Gln) + L-glutamate + ADP + phosphate + H(+)</text>
        <dbReference type="Rhea" id="RHEA:17521"/>
        <dbReference type="Rhea" id="RHEA-COMP:9681"/>
        <dbReference type="Rhea" id="RHEA-COMP:9684"/>
        <dbReference type="ChEBI" id="CHEBI:15377"/>
        <dbReference type="ChEBI" id="CHEBI:15378"/>
        <dbReference type="ChEBI" id="CHEBI:29985"/>
        <dbReference type="ChEBI" id="CHEBI:30616"/>
        <dbReference type="ChEBI" id="CHEBI:43474"/>
        <dbReference type="ChEBI" id="CHEBI:58359"/>
        <dbReference type="ChEBI" id="CHEBI:78520"/>
        <dbReference type="ChEBI" id="CHEBI:78521"/>
        <dbReference type="ChEBI" id="CHEBI:456216"/>
    </reaction>
</comment>
<comment type="subunit">
    <text evidence="1">Heterodimer of GatD and GatE.</text>
</comment>
<comment type="similarity">
    <text evidence="1">Belongs to the asparaginase 1 family. GatD subfamily.</text>
</comment>
<proteinExistence type="inferred from homology"/>
<accession>Q5JI77</accession>
<keyword id="KW-0067">ATP-binding</keyword>
<keyword id="KW-0436">Ligase</keyword>
<keyword id="KW-0547">Nucleotide-binding</keyword>
<keyword id="KW-0648">Protein biosynthesis</keyword>
<keyword id="KW-1185">Reference proteome</keyword>
<gene>
    <name evidence="1" type="primary">gatD</name>
    <name type="ordered locus">TK0908</name>
</gene>
<evidence type="ECO:0000255" key="1">
    <source>
        <dbReference type="HAMAP-Rule" id="MF_00586"/>
    </source>
</evidence>
<evidence type="ECO:0000255" key="2">
    <source>
        <dbReference type="PROSITE-ProRule" id="PRU01068"/>
    </source>
</evidence>
<dbReference type="EC" id="6.3.5.-" evidence="1"/>
<dbReference type="EMBL" id="AP006878">
    <property type="protein sequence ID" value="BAD85097.1"/>
    <property type="molecule type" value="Genomic_DNA"/>
</dbReference>
<dbReference type="RefSeq" id="WP_011249859.1">
    <property type="nucleotide sequence ID" value="NC_006624.1"/>
</dbReference>
<dbReference type="SMR" id="Q5JI77"/>
<dbReference type="FunCoup" id="Q5JI77">
    <property type="interactions" value="33"/>
</dbReference>
<dbReference type="STRING" id="69014.TK0908"/>
<dbReference type="EnsemblBacteria" id="BAD85097">
    <property type="protein sequence ID" value="BAD85097"/>
    <property type="gene ID" value="TK0908"/>
</dbReference>
<dbReference type="GeneID" id="78447423"/>
<dbReference type="KEGG" id="tko:TK0908"/>
<dbReference type="PATRIC" id="fig|69014.16.peg.887"/>
<dbReference type="eggNOG" id="arCOG01924">
    <property type="taxonomic scope" value="Archaea"/>
</dbReference>
<dbReference type="HOGENOM" id="CLU_019134_2_1_2"/>
<dbReference type="InParanoid" id="Q5JI77"/>
<dbReference type="OrthoDB" id="371959at2157"/>
<dbReference type="PhylomeDB" id="Q5JI77"/>
<dbReference type="Proteomes" id="UP000000536">
    <property type="component" value="Chromosome"/>
</dbReference>
<dbReference type="GO" id="GO:0004067">
    <property type="term" value="F:asparaginase activity"/>
    <property type="evidence" value="ECO:0007669"/>
    <property type="project" value="InterPro"/>
</dbReference>
<dbReference type="GO" id="GO:0005524">
    <property type="term" value="F:ATP binding"/>
    <property type="evidence" value="ECO:0007669"/>
    <property type="project" value="UniProtKB-KW"/>
</dbReference>
<dbReference type="GO" id="GO:0050567">
    <property type="term" value="F:glutaminyl-tRNA synthase (glutamine-hydrolyzing) activity"/>
    <property type="evidence" value="ECO:0007669"/>
    <property type="project" value="UniProtKB-UniRule"/>
</dbReference>
<dbReference type="GO" id="GO:0006520">
    <property type="term" value="P:amino acid metabolic process"/>
    <property type="evidence" value="ECO:0007669"/>
    <property type="project" value="InterPro"/>
</dbReference>
<dbReference type="GO" id="GO:0006450">
    <property type="term" value="P:regulation of translational fidelity"/>
    <property type="evidence" value="ECO:0007669"/>
    <property type="project" value="InterPro"/>
</dbReference>
<dbReference type="GO" id="GO:0006412">
    <property type="term" value="P:translation"/>
    <property type="evidence" value="ECO:0007669"/>
    <property type="project" value="UniProtKB-UniRule"/>
</dbReference>
<dbReference type="CDD" id="cd08962">
    <property type="entry name" value="GatD"/>
    <property type="match status" value="1"/>
</dbReference>
<dbReference type="FunFam" id="3.40.50.1170:FF:000001">
    <property type="entry name" value="L-asparaginase 2"/>
    <property type="match status" value="1"/>
</dbReference>
<dbReference type="Gene3D" id="2.30.30.520">
    <property type="match status" value="1"/>
</dbReference>
<dbReference type="Gene3D" id="3.40.50.40">
    <property type="match status" value="1"/>
</dbReference>
<dbReference type="Gene3D" id="3.40.50.1170">
    <property type="entry name" value="L-asparaginase, N-terminal domain"/>
    <property type="match status" value="1"/>
</dbReference>
<dbReference type="HAMAP" id="MF_00586">
    <property type="entry name" value="GatD"/>
    <property type="match status" value="1"/>
</dbReference>
<dbReference type="InterPro" id="IPR006033">
    <property type="entry name" value="AsnA_fam"/>
</dbReference>
<dbReference type="InterPro" id="IPR036152">
    <property type="entry name" value="Asp/glu_Ase-like_sf"/>
</dbReference>
<dbReference type="InterPro" id="IPR006034">
    <property type="entry name" value="Asparaginase/glutaminase-like"/>
</dbReference>
<dbReference type="InterPro" id="IPR020827">
    <property type="entry name" value="Asparaginase/glutaminase_AS1"/>
</dbReference>
<dbReference type="InterPro" id="IPR027475">
    <property type="entry name" value="Asparaginase/glutaminase_AS2"/>
</dbReference>
<dbReference type="InterPro" id="IPR040919">
    <property type="entry name" value="Asparaginase_C"/>
</dbReference>
<dbReference type="InterPro" id="IPR011878">
    <property type="entry name" value="GatD"/>
</dbReference>
<dbReference type="InterPro" id="IPR040918">
    <property type="entry name" value="GatD_N"/>
</dbReference>
<dbReference type="InterPro" id="IPR037222">
    <property type="entry name" value="GatD_N_sf"/>
</dbReference>
<dbReference type="InterPro" id="IPR027473">
    <property type="entry name" value="L-asparaginase_C"/>
</dbReference>
<dbReference type="InterPro" id="IPR027474">
    <property type="entry name" value="L-asparaginase_N"/>
</dbReference>
<dbReference type="InterPro" id="IPR037152">
    <property type="entry name" value="L-asparaginase_N_sf"/>
</dbReference>
<dbReference type="NCBIfam" id="TIGR00519">
    <property type="entry name" value="asnASE_I"/>
    <property type="match status" value="1"/>
</dbReference>
<dbReference type="NCBIfam" id="TIGR02153">
    <property type="entry name" value="gatD_arch"/>
    <property type="match status" value="1"/>
</dbReference>
<dbReference type="NCBIfam" id="NF003217">
    <property type="entry name" value="PRK04183.1"/>
    <property type="match status" value="1"/>
</dbReference>
<dbReference type="PANTHER" id="PTHR11707:SF28">
    <property type="entry name" value="60 KDA LYSOPHOSPHOLIPASE"/>
    <property type="match status" value="1"/>
</dbReference>
<dbReference type="PANTHER" id="PTHR11707">
    <property type="entry name" value="L-ASPARAGINASE"/>
    <property type="match status" value="1"/>
</dbReference>
<dbReference type="Pfam" id="PF00710">
    <property type="entry name" value="Asparaginase"/>
    <property type="match status" value="1"/>
</dbReference>
<dbReference type="Pfam" id="PF17763">
    <property type="entry name" value="Asparaginase_C"/>
    <property type="match status" value="1"/>
</dbReference>
<dbReference type="Pfam" id="PF18195">
    <property type="entry name" value="GatD_N"/>
    <property type="match status" value="1"/>
</dbReference>
<dbReference type="PIRSF" id="PIRSF500175">
    <property type="entry name" value="Glu_ADT_D"/>
    <property type="match status" value="1"/>
</dbReference>
<dbReference type="PIRSF" id="PIRSF001220">
    <property type="entry name" value="L-ASNase_gatD"/>
    <property type="match status" value="1"/>
</dbReference>
<dbReference type="PRINTS" id="PR00139">
    <property type="entry name" value="ASNGLNASE"/>
</dbReference>
<dbReference type="SMART" id="SM00870">
    <property type="entry name" value="Asparaginase"/>
    <property type="match status" value="1"/>
</dbReference>
<dbReference type="SUPFAM" id="SSF141300">
    <property type="entry name" value="GatD N-terminal domain-like"/>
    <property type="match status" value="1"/>
</dbReference>
<dbReference type="SUPFAM" id="SSF53774">
    <property type="entry name" value="Glutaminase/Asparaginase"/>
    <property type="match status" value="1"/>
</dbReference>
<dbReference type="PROSITE" id="PS00144">
    <property type="entry name" value="ASN_GLN_ASE_1"/>
    <property type="match status" value="1"/>
</dbReference>
<dbReference type="PROSITE" id="PS00917">
    <property type="entry name" value="ASN_GLN_ASE_2"/>
    <property type="match status" value="1"/>
</dbReference>
<dbReference type="PROSITE" id="PS51732">
    <property type="entry name" value="ASN_GLN_ASE_3"/>
    <property type="match status" value="1"/>
</dbReference>
<protein>
    <recommendedName>
        <fullName evidence="1">Glutamyl-tRNA(Gln) amidotransferase subunit D</fullName>
        <shortName evidence="1">Glu-ADT subunit D</shortName>
        <ecNumber evidence="1">6.3.5.-</ecNumber>
    </recommendedName>
</protein>
<organism>
    <name type="scientific">Thermococcus kodakarensis (strain ATCC BAA-918 / JCM 12380 / KOD1)</name>
    <name type="common">Pyrococcus kodakaraensis (strain KOD1)</name>
    <dbReference type="NCBI Taxonomy" id="69014"/>
    <lineage>
        <taxon>Archaea</taxon>
        <taxon>Methanobacteriati</taxon>
        <taxon>Methanobacteriota</taxon>
        <taxon>Thermococci</taxon>
        <taxon>Thermococcales</taxon>
        <taxon>Thermococcaceae</taxon>
        <taxon>Thermococcus</taxon>
    </lineage>
</organism>
<feature type="chain" id="PRO_0000140062" description="Glutamyl-tRNA(Gln) amidotransferase subunit D">
    <location>
        <begin position="1"/>
        <end position="440"/>
    </location>
</feature>
<feature type="domain" description="Asparaginase/glutaminase" evidence="2">
    <location>
        <begin position="94"/>
        <end position="424"/>
    </location>
</feature>
<feature type="active site" evidence="1">
    <location>
        <position position="104"/>
    </location>
</feature>
<feature type="active site" evidence="1">
    <location>
        <position position="180"/>
    </location>
</feature>
<feature type="active site" evidence="1">
    <location>
        <position position="181"/>
    </location>
</feature>
<feature type="active site" evidence="1">
    <location>
        <position position="258"/>
    </location>
</feature>
<sequence length="440" mass="48941">MKRKVDEFMERHGLGVGDLVRVVKREGDERITFEGLVMPPYELSPGETLTIKLDNGYNIGILIDAIEGIEILEKAKEAPKMEFREVLPRKEGLPSVTILGTGGTIASRIDYKTGAVHAAFTAEELAKAVPEIFDIANITPKLLFNIMSEDMKPEYWKKIAHEAAKALNSDEDGVVIAHGTDTMGYTAAALSFMLRNLTKPVVLVGSQRSSDRPSSDAAMNLICATRMAVSDAAEVMVVMHGETSDTYCLAHRGTKVRKMHTSRRDTFRSINDVPIAKVWPDGKIEYLRDDYRKRGEGEVEVDDKFEEKVAILKIYPGVTSELLEFLVDRGYKGIVIEGTGLGHTPNDMIPAIERAVENGVAVCMTSQCLYGRVNLNVYSTGRRLLKAGVIPCEDMLPETAYVKLGWVLGHTDDLKEVRRMMLTNYAGEITPYTRFDTFLR</sequence>